<name>RL31B_STAHJ</name>
<protein>
    <recommendedName>
        <fullName evidence="1">Large ribosomal subunit protein bL31B</fullName>
    </recommendedName>
    <alternativeName>
        <fullName evidence="2">50S ribosomal protein L31 type B</fullName>
    </alternativeName>
</protein>
<proteinExistence type="inferred from homology"/>
<evidence type="ECO:0000255" key="1">
    <source>
        <dbReference type="HAMAP-Rule" id="MF_00502"/>
    </source>
</evidence>
<evidence type="ECO:0000305" key="2"/>
<comment type="subunit">
    <text evidence="1">Part of the 50S ribosomal subunit.</text>
</comment>
<comment type="similarity">
    <text evidence="1">Belongs to the bacterial ribosomal protein bL31 family. Type B subfamily.</text>
</comment>
<reference key="1">
    <citation type="journal article" date="2005" name="J. Bacteriol.">
        <title>Whole-genome sequencing of Staphylococcus haemolyticus uncovers the extreme plasticity of its genome and the evolution of human-colonizing staphylococcal species.</title>
        <authorList>
            <person name="Takeuchi F."/>
            <person name="Watanabe S."/>
            <person name="Baba T."/>
            <person name="Yuzawa H."/>
            <person name="Ito T."/>
            <person name="Morimoto Y."/>
            <person name="Kuroda M."/>
            <person name="Cui L."/>
            <person name="Takahashi M."/>
            <person name="Ankai A."/>
            <person name="Baba S."/>
            <person name="Fukui S."/>
            <person name="Lee J.C."/>
            <person name="Hiramatsu K."/>
        </authorList>
    </citation>
    <scope>NUCLEOTIDE SEQUENCE [LARGE SCALE GENOMIC DNA]</scope>
    <source>
        <strain>JCSC1435</strain>
    </source>
</reference>
<accession>Q4L801</accession>
<feature type="chain" id="PRO_0000259123" description="Large ribosomal subunit protein bL31B">
    <location>
        <begin position="1"/>
        <end position="85"/>
    </location>
</feature>
<keyword id="KW-0687">Ribonucleoprotein</keyword>
<keyword id="KW-0689">Ribosomal protein</keyword>
<organism>
    <name type="scientific">Staphylococcus haemolyticus (strain JCSC1435)</name>
    <dbReference type="NCBI Taxonomy" id="279808"/>
    <lineage>
        <taxon>Bacteria</taxon>
        <taxon>Bacillati</taxon>
        <taxon>Bacillota</taxon>
        <taxon>Bacilli</taxon>
        <taxon>Bacillales</taxon>
        <taxon>Staphylococcaceae</taxon>
        <taxon>Staphylococcus</taxon>
    </lineage>
</organism>
<dbReference type="EMBL" id="AP006716">
    <property type="protein sequence ID" value="BAE04224.1"/>
    <property type="molecule type" value="Genomic_DNA"/>
</dbReference>
<dbReference type="RefSeq" id="WP_011275226.1">
    <property type="nucleotide sequence ID" value="NC_007168.1"/>
</dbReference>
<dbReference type="SMR" id="Q4L801"/>
<dbReference type="KEGG" id="sha:SH0915"/>
<dbReference type="eggNOG" id="COG0254">
    <property type="taxonomic scope" value="Bacteria"/>
</dbReference>
<dbReference type="HOGENOM" id="CLU_114306_2_2_9"/>
<dbReference type="OrthoDB" id="9803251at2"/>
<dbReference type="Proteomes" id="UP000000543">
    <property type="component" value="Chromosome"/>
</dbReference>
<dbReference type="GO" id="GO:1990904">
    <property type="term" value="C:ribonucleoprotein complex"/>
    <property type="evidence" value="ECO:0007669"/>
    <property type="project" value="UniProtKB-KW"/>
</dbReference>
<dbReference type="GO" id="GO:0005840">
    <property type="term" value="C:ribosome"/>
    <property type="evidence" value="ECO:0007669"/>
    <property type="project" value="UniProtKB-KW"/>
</dbReference>
<dbReference type="GO" id="GO:0003735">
    <property type="term" value="F:structural constituent of ribosome"/>
    <property type="evidence" value="ECO:0007669"/>
    <property type="project" value="InterPro"/>
</dbReference>
<dbReference type="GO" id="GO:0006412">
    <property type="term" value="P:translation"/>
    <property type="evidence" value="ECO:0007669"/>
    <property type="project" value="UniProtKB-UniRule"/>
</dbReference>
<dbReference type="Gene3D" id="4.10.830.30">
    <property type="entry name" value="Ribosomal protein L31"/>
    <property type="match status" value="1"/>
</dbReference>
<dbReference type="HAMAP" id="MF_00502">
    <property type="entry name" value="Ribosomal_bL31_2"/>
    <property type="match status" value="1"/>
</dbReference>
<dbReference type="InterPro" id="IPR034704">
    <property type="entry name" value="Ribosomal_bL28/bL31-like_sf"/>
</dbReference>
<dbReference type="InterPro" id="IPR002150">
    <property type="entry name" value="Ribosomal_bL31"/>
</dbReference>
<dbReference type="InterPro" id="IPR027493">
    <property type="entry name" value="Ribosomal_bL31_B"/>
</dbReference>
<dbReference type="InterPro" id="IPR042105">
    <property type="entry name" value="Ribosomal_bL31_sf"/>
</dbReference>
<dbReference type="NCBIfam" id="TIGR00105">
    <property type="entry name" value="L31"/>
    <property type="match status" value="1"/>
</dbReference>
<dbReference type="NCBIfam" id="NF002462">
    <property type="entry name" value="PRK01678.1"/>
    <property type="match status" value="1"/>
</dbReference>
<dbReference type="PANTHER" id="PTHR33280">
    <property type="entry name" value="50S RIBOSOMAL PROTEIN L31, CHLOROPLASTIC"/>
    <property type="match status" value="1"/>
</dbReference>
<dbReference type="PANTHER" id="PTHR33280:SF1">
    <property type="entry name" value="LARGE RIBOSOMAL SUBUNIT PROTEIN BL31C"/>
    <property type="match status" value="1"/>
</dbReference>
<dbReference type="Pfam" id="PF01197">
    <property type="entry name" value="Ribosomal_L31"/>
    <property type="match status" value="1"/>
</dbReference>
<dbReference type="PRINTS" id="PR01249">
    <property type="entry name" value="RIBOSOMALL31"/>
</dbReference>
<dbReference type="SUPFAM" id="SSF143800">
    <property type="entry name" value="L28p-like"/>
    <property type="match status" value="1"/>
</dbReference>
<dbReference type="PROSITE" id="PS01143">
    <property type="entry name" value="RIBOSOMAL_L31"/>
    <property type="match status" value="1"/>
</dbReference>
<sequence>MRQGIHPDYHKVIFLDTTTNFKFLSGSTKTSSETMEWEDGNEYPVIRLDVSSDSHPFYTGRQKFAAADGRVERFNKKFGLKSNNN</sequence>
<gene>
    <name evidence="1" type="primary">rpmE2</name>
    <name type="ordered locus">SH0915</name>
</gene>